<reference key="1">
    <citation type="journal article" date="2008" name="Appl. Environ. Microbiol.">
        <title>The genome of Polaromonas sp. strain JS666: insights into the evolution of a hydrocarbon- and xenobiotic-degrading bacterium, and features of relevance to biotechnology.</title>
        <authorList>
            <person name="Mattes T.E."/>
            <person name="Alexander A.K."/>
            <person name="Richardson P.M."/>
            <person name="Munk A.C."/>
            <person name="Han C.S."/>
            <person name="Stothard P."/>
            <person name="Coleman N.V."/>
        </authorList>
    </citation>
    <scope>NUCLEOTIDE SEQUENCE [LARGE SCALE GENOMIC DNA]</scope>
    <source>
        <strain>JS666 / ATCC BAA-500</strain>
    </source>
</reference>
<feature type="chain" id="PRO_0000294819" description="Small ribosomal subunit protein uS11">
    <location>
        <begin position="1"/>
        <end position="134"/>
    </location>
</feature>
<organism>
    <name type="scientific">Polaromonas sp. (strain JS666 / ATCC BAA-500)</name>
    <dbReference type="NCBI Taxonomy" id="296591"/>
    <lineage>
        <taxon>Bacteria</taxon>
        <taxon>Pseudomonadati</taxon>
        <taxon>Pseudomonadota</taxon>
        <taxon>Betaproteobacteria</taxon>
        <taxon>Burkholderiales</taxon>
        <taxon>Comamonadaceae</taxon>
        <taxon>Polaromonas</taxon>
    </lineage>
</organism>
<keyword id="KW-1185">Reference proteome</keyword>
<keyword id="KW-0687">Ribonucleoprotein</keyword>
<keyword id="KW-0689">Ribosomal protein</keyword>
<keyword id="KW-0694">RNA-binding</keyword>
<keyword id="KW-0699">rRNA-binding</keyword>
<protein>
    <recommendedName>
        <fullName evidence="1">Small ribosomal subunit protein uS11</fullName>
    </recommendedName>
    <alternativeName>
        <fullName evidence="2">30S ribosomal protein S11</fullName>
    </alternativeName>
</protein>
<evidence type="ECO:0000255" key="1">
    <source>
        <dbReference type="HAMAP-Rule" id="MF_01310"/>
    </source>
</evidence>
<evidence type="ECO:0000305" key="2"/>
<gene>
    <name evidence="1" type="primary">rpsK</name>
    <name type="ordered locus">Bpro_0499</name>
</gene>
<comment type="function">
    <text evidence="1">Located on the platform of the 30S subunit, it bridges several disparate RNA helices of the 16S rRNA. Forms part of the Shine-Dalgarno cleft in the 70S ribosome.</text>
</comment>
<comment type="subunit">
    <text evidence="1">Part of the 30S ribosomal subunit. Interacts with proteins S7 and S18. Binds to IF-3.</text>
</comment>
<comment type="similarity">
    <text evidence="1">Belongs to the universal ribosomal protein uS11 family.</text>
</comment>
<sequence>MAKSPSNNAAQRVRKKVRKNVADGIAHVHASFNNTIITITDRQGNALSWASSGGQGFKGSRKSTPFAAQVASEVAGRAAIEQGIKNLDVEIKGPGPGRESSVRALGALGIRINSIADVTPVPHNGCRPQKRRRI</sequence>
<name>RS11_POLSJ</name>
<dbReference type="EMBL" id="CP000316">
    <property type="protein sequence ID" value="ABE42463.1"/>
    <property type="molecule type" value="Genomic_DNA"/>
</dbReference>
<dbReference type="RefSeq" id="WP_007869288.1">
    <property type="nucleotide sequence ID" value="NZ_FNHX01000009.1"/>
</dbReference>
<dbReference type="SMR" id="Q12G79"/>
<dbReference type="STRING" id="296591.Bpro_0499"/>
<dbReference type="KEGG" id="pol:Bpro_0499"/>
<dbReference type="eggNOG" id="COG0100">
    <property type="taxonomic scope" value="Bacteria"/>
</dbReference>
<dbReference type="HOGENOM" id="CLU_072439_5_0_4"/>
<dbReference type="OrthoDB" id="9806415at2"/>
<dbReference type="Proteomes" id="UP000001983">
    <property type="component" value="Chromosome"/>
</dbReference>
<dbReference type="GO" id="GO:1990904">
    <property type="term" value="C:ribonucleoprotein complex"/>
    <property type="evidence" value="ECO:0007669"/>
    <property type="project" value="UniProtKB-KW"/>
</dbReference>
<dbReference type="GO" id="GO:0005840">
    <property type="term" value="C:ribosome"/>
    <property type="evidence" value="ECO:0007669"/>
    <property type="project" value="UniProtKB-KW"/>
</dbReference>
<dbReference type="GO" id="GO:0019843">
    <property type="term" value="F:rRNA binding"/>
    <property type="evidence" value="ECO:0007669"/>
    <property type="project" value="UniProtKB-UniRule"/>
</dbReference>
<dbReference type="GO" id="GO:0003735">
    <property type="term" value="F:structural constituent of ribosome"/>
    <property type="evidence" value="ECO:0007669"/>
    <property type="project" value="InterPro"/>
</dbReference>
<dbReference type="GO" id="GO:0006412">
    <property type="term" value="P:translation"/>
    <property type="evidence" value="ECO:0007669"/>
    <property type="project" value="UniProtKB-UniRule"/>
</dbReference>
<dbReference type="FunFam" id="3.30.420.80:FF:000001">
    <property type="entry name" value="30S ribosomal protein S11"/>
    <property type="match status" value="1"/>
</dbReference>
<dbReference type="Gene3D" id="3.30.420.80">
    <property type="entry name" value="Ribosomal protein S11"/>
    <property type="match status" value="1"/>
</dbReference>
<dbReference type="HAMAP" id="MF_01310">
    <property type="entry name" value="Ribosomal_uS11"/>
    <property type="match status" value="1"/>
</dbReference>
<dbReference type="InterPro" id="IPR001971">
    <property type="entry name" value="Ribosomal_uS11"/>
</dbReference>
<dbReference type="InterPro" id="IPR019981">
    <property type="entry name" value="Ribosomal_uS11_bac-type"/>
</dbReference>
<dbReference type="InterPro" id="IPR018102">
    <property type="entry name" value="Ribosomal_uS11_CS"/>
</dbReference>
<dbReference type="InterPro" id="IPR036967">
    <property type="entry name" value="Ribosomal_uS11_sf"/>
</dbReference>
<dbReference type="NCBIfam" id="NF003698">
    <property type="entry name" value="PRK05309.1"/>
    <property type="match status" value="1"/>
</dbReference>
<dbReference type="NCBIfam" id="TIGR03632">
    <property type="entry name" value="uS11_bact"/>
    <property type="match status" value="1"/>
</dbReference>
<dbReference type="PANTHER" id="PTHR11759">
    <property type="entry name" value="40S RIBOSOMAL PROTEIN S14/30S RIBOSOMAL PROTEIN S11"/>
    <property type="match status" value="1"/>
</dbReference>
<dbReference type="Pfam" id="PF00411">
    <property type="entry name" value="Ribosomal_S11"/>
    <property type="match status" value="1"/>
</dbReference>
<dbReference type="PIRSF" id="PIRSF002131">
    <property type="entry name" value="Ribosomal_S11"/>
    <property type="match status" value="1"/>
</dbReference>
<dbReference type="SUPFAM" id="SSF53137">
    <property type="entry name" value="Translational machinery components"/>
    <property type="match status" value="1"/>
</dbReference>
<dbReference type="PROSITE" id="PS00054">
    <property type="entry name" value="RIBOSOMAL_S11"/>
    <property type="match status" value="1"/>
</dbReference>
<proteinExistence type="inferred from homology"/>
<accession>Q12G79</accession>